<protein>
    <recommendedName>
        <fullName evidence="1">Elongation factor 4</fullName>
        <shortName evidence="1">EF-4</shortName>
        <ecNumber evidence="1">3.6.5.n1</ecNumber>
    </recommendedName>
    <alternativeName>
        <fullName evidence="1">Ribosomal back-translocase LepA</fullName>
    </alternativeName>
</protein>
<gene>
    <name evidence="1" type="primary">lepA</name>
    <name type="ordered locus">Exig_0777</name>
</gene>
<sequence>MNNADRLKRQKSIRNFSIIAHIDHGKSTLADRILEKTGALTSREMKDQTLDAMDLERERGITIKLNAVQLKYTAKDGEEYILHLIDTPGHVDFTYEVSRSLAACEGAVLVVDAAQGIEAQTLANVYLALDNDLEILPIINKIDLPSADVERVRQEIEDVIGLDASEAVPTSAKAGIGIEEILEQIVAKVPAPTGDPEAPLEALIFDSYYDAYRGVVASIRVVNGTVKVGDKIRMMSTGKDFEVLELAVSTPKPLRQKELTVGDVGTLSASIKTVGDVRVGDTITLAKQPAQEALPGYRKMNPMVYCGLYPIDAARYNDLREALERLQLSDAALEFEPETSQALGFGFRCGFLGMLHMEIIQERIEREFNIDMITTAPSVIYHVTTTAGEVLHVDNPSKMPEQQKVEFIEEPYVKAAVMTPNDYVGAIMELCQKKRGTFIDMEYIDTTRVKITYELPLSEIVYDFFDQLKSSTKGYASLDYELIGYQQSRLVKMDILLNNENVDALSFIVHRDFAYERGKVIVDKLKELIPRMQFEVPIQAAVGTKIVARSTIKALRKNVLAKCYGGDISRKRKLLEKQKEGKKRMKMVGSVEVPQEAFMSVLSMDED</sequence>
<name>LEPA_EXIS2</name>
<evidence type="ECO:0000255" key="1">
    <source>
        <dbReference type="HAMAP-Rule" id="MF_00071"/>
    </source>
</evidence>
<reference key="1">
    <citation type="submission" date="2008-04" db="EMBL/GenBank/DDBJ databases">
        <title>Complete sequence of chromosome of Exiguobacterium sibiricum 255-15.</title>
        <authorList>
            <consortium name="US DOE Joint Genome Institute"/>
            <person name="Copeland A."/>
            <person name="Lucas S."/>
            <person name="Lapidus A."/>
            <person name="Glavina del Rio T."/>
            <person name="Dalin E."/>
            <person name="Tice H."/>
            <person name="Bruce D."/>
            <person name="Goodwin L."/>
            <person name="Pitluck S."/>
            <person name="Kiss H."/>
            <person name="Chertkov O."/>
            <person name="Monk C."/>
            <person name="Brettin T."/>
            <person name="Detter J.C."/>
            <person name="Han C."/>
            <person name="Kuske C.R."/>
            <person name="Schmutz J."/>
            <person name="Larimer F."/>
            <person name="Land M."/>
            <person name="Hauser L."/>
            <person name="Kyrpides N."/>
            <person name="Mikhailova N."/>
            <person name="Vishnivetskaya T."/>
            <person name="Rodrigues D.F."/>
            <person name="Gilichinsky D."/>
            <person name="Tiedje J."/>
            <person name="Richardson P."/>
        </authorList>
    </citation>
    <scope>NUCLEOTIDE SEQUENCE [LARGE SCALE GENOMIC DNA]</scope>
    <source>
        <strain>DSM 17290 / CCUG 55495 / CIP 109462 / JCM 13490 / 255-15</strain>
    </source>
</reference>
<proteinExistence type="inferred from homology"/>
<dbReference type="EC" id="3.6.5.n1" evidence="1"/>
<dbReference type="EMBL" id="CP001022">
    <property type="protein sequence ID" value="ACB60258.1"/>
    <property type="molecule type" value="Genomic_DNA"/>
</dbReference>
<dbReference type="RefSeq" id="WP_012369682.1">
    <property type="nucleotide sequence ID" value="NC_010556.1"/>
</dbReference>
<dbReference type="SMR" id="B1YKS5"/>
<dbReference type="STRING" id="262543.Exig_0777"/>
<dbReference type="KEGG" id="esi:Exig_0777"/>
<dbReference type="eggNOG" id="COG0481">
    <property type="taxonomic scope" value="Bacteria"/>
</dbReference>
<dbReference type="HOGENOM" id="CLU_009995_3_3_9"/>
<dbReference type="OrthoDB" id="9804431at2"/>
<dbReference type="Proteomes" id="UP000001681">
    <property type="component" value="Chromosome"/>
</dbReference>
<dbReference type="GO" id="GO:0005886">
    <property type="term" value="C:plasma membrane"/>
    <property type="evidence" value="ECO:0007669"/>
    <property type="project" value="UniProtKB-SubCell"/>
</dbReference>
<dbReference type="GO" id="GO:0005525">
    <property type="term" value="F:GTP binding"/>
    <property type="evidence" value="ECO:0007669"/>
    <property type="project" value="UniProtKB-UniRule"/>
</dbReference>
<dbReference type="GO" id="GO:0003924">
    <property type="term" value="F:GTPase activity"/>
    <property type="evidence" value="ECO:0007669"/>
    <property type="project" value="UniProtKB-UniRule"/>
</dbReference>
<dbReference type="GO" id="GO:0043022">
    <property type="term" value="F:ribosome binding"/>
    <property type="evidence" value="ECO:0007669"/>
    <property type="project" value="UniProtKB-UniRule"/>
</dbReference>
<dbReference type="GO" id="GO:0003746">
    <property type="term" value="F:translation elongation factor activity"/>
    <property type="evidence" value="ECO:0007669"/>
    <property type="project" value="UniProtKB-UniRule"/>
</dbReference>
<dbReference type="GO" id="GO:0045727">
    <property type="term" value="P:positive regulation of translation"/>
    <property type="evidence" value="ECO:0007669"/>
    <property type="project" value="UniProtKB-UniRule"/>
</dbReference>
<dbReference type="CDD" id="cd03699">
    <property type="entry name" value="EF4_II"/>
    <property type="match status" value="1"/>
</dbReference>
<dbReference type="CDD" id="cd16260">
    <property type="entry name" value="EF4_III"/>
    <property type="match status" value="1"/>
</dbReference>
<dbReference type="CDD" id="cd01890">
    <property type="entry name" value="LepA"/>
    <property type="match status" value="1"/>
</dbReference>
<dbReference type="CDD" id="cd03709">
    <property type="entry name" value="lepA_C"/>
    <property type="match status" value="1"/>
</dbReference>
<dbReference type="FunFam" id="3.40.50.300:FF:000078">
    <property type="entry name" value="Elongation factor 4"/>
    <property type="match status" value="1"/>
</dbReference>
<dbReference type="FunFam" id="2.40.30.10:FF:000015">
    <property type="entry name" value="Translation factor GUF1, mitochondrial"/>
    <property type="match status" value="1"/>
</dbReference>
<dbReference type="FunFam" id="3.30.70.240:FF:000007">
    <property type="entry name" value="Translation factor GUF1, mitochondrial"/>
    <property type="match status" value="1"/>
</dbReference>
<dbReference type="FunFam" id="3.30.70.2570:FF:000001">
    <property type="entry name" value="Translation factor GUF1, mitochondrial"/>
    <property type="match status" value="1"/>
</dbReference>
<dbReference type="FunFam" id="3.30.70.870:FF:000004">
    <property type="entry name" value="Translation factor GUF1, mitochondrial"/>
    <property type="match status" value="1"/>
</dbReference>
<dbReference type="Gene3D" id="3.30.70.240">
    <property type="match status" value="1"/>
</dbReference>
<dbReference type="Gene3D" id="3.30.70.2570">
    <property type="entry name" value="Elongation factor 4, C-terminal domain"/>
    <property type="match status" value="1"/>
</dbReference>
<dbReference type="Gene3D" id="3.30.70.870">
    <property type="entry name" value="Elongation Factor G (Translational Gtpase), domain 3"/>
    <property type="match status" value="1"/>
</dbReference>
<dbReference type="Gene3D" id="3.40.50.300">
    <property type="entry name" value="P-loop containing nucleotide triphosphate hydrolases"/>
    <property type="match status" value="1"/>
</dbReference>
<dbReference type="Gene3D" id="2.40.30.10">
    <property type="entry name" value="Translation factors"/>
    <property type="match status" value="1"/>
</dbReference>
<dbReference type="HAMAP" id="MF_00071">
    <property type="entry name" value="LepA"/>
    <property type="match status" value="1"/>
</dbReference>
<dbReference type="InterPro" id="IPR006297">
    <property type="entry name" value="EF-4"/>
</dbReference>
<dbReference type="InterPro" id="IPR035647">
    <property type="entry name" value="EFG_III/V"/>
</dbReference>
<dbReference type="InterPro" id="IPR000640">
    <property type="entry name" value="EFG_V-like"/>
</dbReference>
<dbReference type="InterPro" id="IPR004161">
    <property type="entry name" value="EFTu-like_2"/>
</dbReference>
<dbReference type="InterPro" id="IPR031157">
    <property type="entry name" value="G_TR_CS"/>
</dbReference>
<dbReference type="InterPro" id="IPR038363">
    <property type="entry name" value="LepA_C_sf"/>
</dbReference>
<dbReference type="InterPro" id="IPR013842">
    <property type="entry name" value="LepA_CTD"/>
</dbReference>
<dbReference type="InterPro" id="IPR035654">
    <property type="entry name" value="LepA_IV"/>
</dbReference>
<dbReference type="InterPro" id="IPR027417">
    <property type="entry name" value="P-loop_NTPase"/>
</dbReference>
<dbReference type="InterPro" id="IPR005225">
    <property type="entry name" value="Small_GTP-bd"/>
</dbReference>
<dbReference type="InterPro" id="IPR000795">
    <property type="entry name" value="T_Tr_GTP-bd_dom"/>
</dbReference>
<dbReference type="InterPro" id="IPR009000">
    <property type="entry name" value="Transl_B-barrel_sf"/>
</dbReference>
<dbReference type="NCBIfam" id="TIGR01393">
    <property type="entry name" value="lepA"/>
    <property type="match status" value="1"/>
</dbReference>
<dbReference type="NCBIfam" id="TIGR00231">
    <property type="entry name" value="small_GTP"/>
    <property type="match status" value="1"/>
</dbReference>
<dbReference type="PANTHER" id="PTHR43512:SF4">
    <property type="entry name" value="TRANSLATION FACTOR GUF1 HOMOLOG, CHLOROPLASTIC"/>
    <property type="match status" value="1"/>
</dbReference>
<dbReference type="PANTHER" id="PTHR43512">
    <property type="entry name" value="TRANSLATION FACTOR GUF1-RELATED"/>
    <property type="match status" value="1"/>
</dbReference>
<dbReference type="Pfam" id="PF00679">
    <property type="entry name" value="EFG_C"/>
    <property type="match status" value="1"/>
</dbReference>
<dbReference type="Pfam" id="PF00009">
    <property type="entry name" value="GTP_EFTU"/>
    <property type="match status" value="1"/>
</dbReference>
<dbReference type="Pfam" id="PF03144">
    <property type="entry name" value="GTP_EFTU_D2"/>
    <property type="match status" value="1"/>
</dbReference>
<dbReference type="Pfam" id="PF06421">
    <property type="entry name" value="LepA_C"/>
    <property type="match status" value="1"/>
</dbReference>
<dbReference type="PRINTS" id="PR00315">
    <property type="entry name" value="ELONGATNFCT"/>
</dbReference>
<dbReference type="SMART" id="SM00838">
    <property type="entry name" value="EFG_C"/>
    <property type="match status" value="1"/>
</dbReference>
<dbReference type="SUPFAM" id="SSF54980">
    <property type="entry name" value="EF-G C-terminal domain-like"/>
    <property type="match status" value="2"/>
</dbReference>
<dbReference type="SUPFAM" id="SSF52540">
    <property type="entry name" value="P-loop containing nucleoside triphosphate hydrolases"/>
    <property type="match status" value="1"/>
</dbReference>
<dbReference type="SUPFAM" id="SSF50447">
    <property type="entry name" value="Translation proteins"/>
    <property type="match status" value="1"/>
</dbReference>
<dbReference type="PROSITE" id="PS00301">
    <property type="entry name" value="G_TR_1"/>
    <property type="match status" value="1"/>
</dbReference>
<dbReference type="PROSITE" id="PS51722">
    <property type="entry name" value="G_TR_2"/>
    <property type="match status" value="1"/>
</dbReference>
<feature type="chain" id="PRO_1000092399" description="Elongation factor 4">
    <location>
        <begin position="1"/>
        <end position="607"/>
    </location>
</feature>
<feature type="domain" description="tr-type G">
    <location>
        <begin position="11"/>
        <end position="193"/>
    </location>
</feature>
<feature type="binding site" evidence="1">
    <location>
        <begin position="23"/>
        <end position="28"/>
    </location>
    <ligand>
        <name>GTP</name>
        <dbReference type="ChEBI" id="CHEBI:37565"/>
    </ligand>
</feature>
<feature type="binding site" evidence="1">
    <location>
        <begin position="140"/>
        <end position="143"/>
    </location>
    <ligand>
        <name>GTP</name>
        <dbReference type="ChEBI" id="CHEBI:37565"/>
    </ligand>
</feature>
<organism>
    <name type="scientific">Exiguobacterium sibiricum (strain DSM 17290 / CCUG 55495 / CIP 109462 / JCM 13490 / 255-15)</name>
    <dbReference type="NCBI Taxonomy" id="262543"/>
    <lineage>
        <taxon>Bacteria</taxon>
        <taxon>Bacillati</taxon>
        <taxon>Bacillota</taxon>
        <taxon>Bacilli</taxon>
        <taxon>Bacillales</taxon>
        <taxon>Bacillales Family XII. Incertae Sedis</taxon>
        <taxon>Exiguobacterium</taxon>
    </lineage>
</organism>
<accession>B1YKS5</accession>
<comment type="function">
    <text evidence="1">Required for accurate and efficient protein synthesis under certain stress conditions. May act as a fidelity factor of the translation reaction, by catalyzing a one-codon backward translocation of tRNAs on improperly translocated ribosomes. Back-translocation proceeds from a post-translocation (POST) complex to a pre-translocation (PRE) complex, thus giving elongation factor G a second chance to translocate the tRNAs correctly. Binds to ribosomes in a GTP-dependent manner.</text>
</comment>
<comment type="catalytic activity">
    <reaction evidence="1">
        <text>GTP + H2O = GDP + phosphate + H(+)</text>
        <dbReference type="Rhea" id="RHEA:19669"/>
        <dbReference type="ChEBI" id="CHEBI:15377"/>
        <dbReference type="ChEBI" id="CHEBI:15378"/>
        <dbReference type="ChEBI" id="CHEBI:37565"/>
        <dbReference type="ChEBI" id="CHEBI:43474"/>
        <dbReference type="ChEBI" id="CHEBI:58189"/>
        <dbReference type="EC" id="3.6.5.n1"/>
    </reaction>
</comment>
<comment type="subcellular location">
    <subcellularLocation>
        <location evidence="1">Cell membrane</location>
        <topology evidence="1">Peripheral membrane protein</topology>
        <orientation evidence="1">Cytoplasmic side</orientation>
    </subcellularLocation>
</comment>
<comment type="similarity">
    <text evidence="1">Belongs to the TRAFAC class translation factor GTPase superfamily. Classic translation factor GTPase family. LepA subfamily.</text>
</comment>
<keyword id="KW-1003">Cell membrane</keyword>
<keyword id="KW-0342">GTP-binding</keyword>
<keyword id="KW-0378">Hydrolase</keyword>
<keyword id="KW-0472">Membrane</keyword>
<keyword id="KW-0547">Nucleotide-binding</keyword>
<keyword id="KW-0648">Protein biosynthesis</keyword>
<keyword id="KW-1185">Reference proteome</keyword>